<gene>
    <name evidence="1" type="primary">dinB</name>
    <name type="ordered locus">LL2029</name>
    <name type="ORF">L0305</name>
</gene>
<protein>
    <recommendedName>
        <fullName evidence="1">DNA polymerase IV</fullName>
        <shortName evidence="1">Pol IV</shortName>
        <ecNumber evidence="1">2.7.7.7</ecNumber>
    </recommendedName>
</protein>
<keyword id="KW-0963">Cytoplasm</keyword>
<keyword id="KW-0227">DNA damage</keyword>
<keyword id="KW-0234">DNA repair</keyword>
<keyword id="KW-0235">DNA replication</keyword>
<keyword id="KW-0238">DNA-binding</keyword>
<keyword id="KW-0239">DNA-directed DNA polymerase</keyword>
<keyword id="KW-0460">Magnesium</keyword>
<keyword id="KW-0479">Metal-binding</keyword>
<keyword id="KW-0515">Mutator protein</keyword>
<keyword id="KW-0548">Nucleotidyltransferase</keyword>
<keyword id="KW-1185">Reference proteome</keyword>
<keyword id="KW-0808">Transferase</keyword>
<evidence type="ECO:0000255" key="1">
    <source>
        <dbReference type="HAMAP-Rule" id="MF_01113"/>
    </source>
</evidence>
<accession>Q9CE21</accession>
<dbReference type="EC" id="2.7.7.7" evidence="1"/>
<dbReference type="EMBL" id="AE005176">
    <property type="protein sequence ID" value="AAK06127.1"/>
    <property type="molecule type" value="Genomic_DNA"/>
</dbReference>
<dbReference type="PIR" id="E86878">
    <property type="entry name" value="E86878"/>
</dbReference>
<dbReference type="RefSeq" id="NP_268186.1">
    <property type="nucleotide sequence ID" value="NC_002662.1"/>
</dbReference>
<dbReference type="RefSeq" id="WP_010906272.1">
    <property type="nucleotide sequence ID" value="NC_002662.1"/>
</dbReference>
<dbReference type="SMR" id="Q9CE21"/>
<dbReference type="PaxDb" id="272623-L0305"/>
<dbReference type="EnsemblBacteria" id="AAK06127">
    <property type="protein sequence ID" value="AAK06127"/>
    <property type="gene ID" value="L0305"/>
</dbReference>
<dbReference type="KEGG" id="lla:L0305"/>
<dbReference type="PATRIC" id="fig|272623.7.peg.2185"/>
<dbReference type="eggNOG" id="COG0389">
    <property type="taxonomic scope" value="Bacteria"/>
</dbReference>
<dbReference type="HOGENOM" id="CLU_012348_1_2_9"/>
<dbReference type="OrthoDB" id="9808813at2"/>
<dbReference type="Proteomes" id="UP000002196">
    <property type="component" value="Chromosome"/>
</dbReference>
<dbReference type="GO" id="GO:0005829">
    <property type="term" value="C:cytosol"/>
    <property type="evidence" value="ECO:0007669"/>
    <property type="project" value="TreeGrafter"/>
</dbReference>
<dbReference type="GO" id="GO:0003684">
    <property type="term" value="F:damaged DNA binding"/>
    <property type="evidence" value="ECO:0007669"/>
    <property type="project" value="InterPro"/>
</dbReference>
<dbReference type="GO" id="GO:0003887">
    <property type="term" value="F:DNA-directed DNA polymerase activity"/>
    <property type="evidence" value="ECO:0007669"/>
    <property type="project" value="UniProtKB-UniRule"/>
</dbReference>
<dbReference type="GO" id="GO:0000287">
    <property type="term" value="F:magnesium ion binding"/>
    <property type="evidence" value="ECO:0007669"/>
    <property type="project" value="UniProtKB-UniRule"/>
</dbReference>
<dbReference type="GO" id="GO:0006261">
    <property type="term" value="P:DNA-templated DNA replication"/>
    <property type="evidence" value="ECO:0007669"/>
    <property type="project" value="UniProtKB-UniRule"/>
</dbReference>
<dbReference type="GO" id="GO:0042276">
    <property type="term" value="P:error-prone translesion synthesis"/>
    <property type="evidence" value="ECO:0007669"/>
    <property type="project" value="TreeGrafter"/>
</dbReference>
<dbReference type="GO" id="GO:0009432">
    <property type="term" value="P:SOS response"/>
    <property type="evidence" value="ECO:0007669"/>
    <property type="project" value="TreeGrafter"/>
</dbReference>
<dbReference type="CDD" id="cd03586">
    <property type="entry name" value="PolY_Pol_IV_kappa"/>
    <property type="match status" value="1"/>
</dbReference>
<dbReference type="FunFam" id="3.30.1490.100:FF:000004">
    <property type="entry name" value="DNA polymerase IV"/>
    <property type="match status" value="1"/>
</dbReference>
<dbReference type="Gene3D" id="3.30.70.270">
    <property type="match status" value="1"/>
</dbReference>
<dbReference type="Gene3D" id="3.40.1170.60">
    <property type="match status" value="1"/>
</dbReference>
<dbReference type="Gene3D" id="1.10.150.20">
    <property type="entry name" value="5' to 3' exonuclease, C-terminal subdomain"/>
    <property type="match status" value="1"/>
</dbReference>
<dbReference type="Gene3D" id="3.30.1490.100">
    <property type="entry name" value="DNA polymerase, Y-family, little finger domain"/>
    <property type="match status" value="1"/>
</dbReference>
<dbReference type="HAMAP" id="MF_01113">
    <property type="entry name" value="DNApol_IV"/>
    <property type="match status" value="1"/>
</dbReference>
<dbReference type="InterPro" id="IPR043502">
    <property type="entry name" value="DNA/RNA_pol_sf"/>
</dbReference>
<dbReference type="InterPro" id="IPR036775">
    <property type="entry name" value="DNA_pol_Y-fam_lit_finger_sf"/>
</dbReference>
<dbReference type="InterPro" id="IPR017961">
    <property type="entry name" value="DNA_pol_Y-fam_little_finger"/>
</dbReference>
<dbReference type="InterPro" id="IPR050116">
    <property type="entry name" value="DNA_polymerase-Y"/>
</dbReference>
<dbReference type="InterPro" id="IPR022880">
    <property type="entry name" value="DNApol_IV"/>
</dbReference>
<dbReference type="InterPro" id="IPR024728">
    <property type="entry name" value="PolY_HhH_motif"/>
</dbReference>
<dbReference type="InterPro" id="IPR043128">
    <property type="entry name" value="Rev_trsase/Diguanyl_cyclase"/>
</dbReference>
<dbReference type="InterPro" id="IPR001126">
    <property type="entry name" value="UmuC"/>
</dbReference>
<dbReference type="NCBIfam" id="NF002677">
    <property type="entry name" value="PRK02406.1"/>
    <property type="match status" value="1"/>
</dbReference>
<dbReference type="PANTHER" id="PTHR11076:SF33">
    <property type="entry name" value="DNA POLYMERASE KAPPA"/>
    <property type="match status" value="1"/>
</dbReference>
<dbReference type="PANTHER" id="PTHR11076">
    <property type="entry name" value="DNA REPAIR POLYMERASE UMUC / TRANSFERASE FAMILY MEMBER"/>
    <property type="match status" value="1"/>
</dbReference>
<dbReference type="Pfam" id="PF00817">
    <property type="entry name" value="IMS"/>
    <property type="match status" value="1"/>
</dbReference>
<dbReference type="Pfam" id="PF11799">
    <property type="entry name" value="IMS_C"/>
    <property type="match status" value="1"/>
</dbReference>
<dbReference type="Pfam" id="PF11798">
    <property type="entry name" value="IMS_HHH"/>
    <property type="match status" value="1"/>
</dbReference>
<dbReference type="SUPFAM" id="SSF56672">
    <property type="entry name" value="DNA/RNA polymerases"/>
    <property type="match status" value="1"/>
</dbReference>
<dbReference type="SUPFAM" id="SSF100879">
    <property type="entry name" value="Lesion bypass DNA polymerase (Y-family), little finger domain"/>
    <property type="match status" value="1"/>
</dbReference>
<dbReference type="PROSITE" id="PS50173">
    <property type="entry name" value="UMUC"/>
    <property type="match status" value="1"/>
</dbReference>
<feature type="chain" id="PRO_0000173917" description="DNA polymerase IV">
    <location>
        <begin position="1"/>
        <end position="363"/>
    </location>
</feature>
<feature type="domain" description="UmuC" evidence="1">
    <location>
        <begin position="14"/>
        <end position="197"/>
    </location>
</feature>
<feature type="active site" evidence="1">
    <location>
        <position position="116"/>
    </location>
</feature>
<feature type="binding site" evidence="1">
    <location>
        <position position="18"/>
    </location>
    <ligand>
        <name>Mg(2+)</name>
        <dbReference type="ChEBI" id="CHEBI:18420"/>
    </ligand>
</feature>
<feature type="binding site" evidence="1">
    <location>
        <position position="115"/>
    </location>
    <ligand>
        <name>Mg(2+)</name>
        <dbReference type="ChEBI" id="CHEBI:18420"/>
    </ligand>
</feature>
<feature type="site" description="Substrate discrimination" evidence="1">
    <location>
        <position position="23"/>
    </location>
</feature>
<comment type="function">
    <text evidence="1">Poorly processive, error-prone DNA polymerase involved in untargeted mutagenesis. Copies undamaged DNA at stalled replication forks, which arise in vivo from mismatched or misaligned primer ends. These misaligned primers can be extended by PolIV. Exhibits no 3'-5' exonuclease (proofreading) activity. May be involved in translesional synthesis, in conjunction with the beta clamp from PolIII.</text>
</comment>
<comment type="catalytic activity">
    <reaction evidence="1">
        <text>DNA(n) + a 2'-deoxyribonucleoside 5'-triphosphate = DNA(n+1) + diphosphate</text>
        <dbReference type="Rhea" id="RHEA:22508"/>
        <dbReference type="Rhea" id="RHEA-COMP:17339"/>
        <dbReference type="Rhea" id="RHEA-COMP:17340"/>
        <dbReference type="ChEBI" id="CHEBI:33019"/>
        <dbReference type="ChEBI" id="CHEBI:61560"/>
        <dbReference type="ChEBI" id="CHEBI:173112"/>
        <dbReference type="EC" id="2.7.7.7"/>
    </reaction>
</comment>
<comment type="cofactor">
    <cofactor evidence="1">
        <name>Mg(2+)</name>
        <dbReference type="ChEBI" id="CHEBI:18420"/>
    </cofactor>
    <text evidence="1">Binds 2 magnesium ions per subunit.</text>
</comment>
<comment type="subunit">
    <text evidence="1">Monomer.</text>
</comment>
<comment type="subcellular location">
    <subcellularLocation>
        <location evidence="1">Cytoplasm</location>
    </subcellularLocation>
</comment>
<comment type="similarity">
    <text evidence="1">Belongs to the DNA polymerase type-Y family.</text>
</comment>
<organism>
    <name type="scientific">Lactococcus lactis subsp. lactis (strain IL1403)</name>
    <name type="common">Streptococcus lactis</name>
    <dbReference type="NCBI Taxonomy" id="272623"/>
    <lineage>
        <taxon>Bacteria</taxon>
        <taxon>Bacillati</taxon>
        <taxon>Bacillota</taxon>
        <taxon>Bacilli</taxon>
        <taxon>Lactobacillales</taxon>
        <taxon>Streptococcaceae</taxon>
        <taxon>Lactococcus</taxon>
    </lineage>
</organism>
<name>DPO4_LACLA</name>
<proteinExistence type="inferred from homology"/>
<sequence length="363" mass="40438">MLTFPLINDTSRKIIHIDMDAFFASVEVRDNPSLKVKPVVIARNPLQTGGRGVVSTCSYEARAFGIHSASAKEAYDLCPQAIFISGNYEKYTKVSKQVREIFKRYTDDIEAASIDEAYLDVTENKIGAQSAIKIAKLIQHDIFVELGLTCSAGVSYNKFLAKIASDYEKPHGLTLIMPEEALEFLAKLPVEKFHGVGKATVPKLHALGFFNGGDLQKADPVDLAERFGVYGWELYQKANGIHNSKVKNYRERKSVGKERTYGKLLYLPDDIKAELSKISGKVSDSLKSHQLKGSIVILKLRYSDFTTLTKRKSLAEKLESPEEIAEVAQEIFEELEYDESLGVRLLGVTVTEFGAQKATLDMQ</sequence>
<reference key="1">
    <citation type="journal article" date="2001" name="Genome Res.">
        <title>The complete genome sequence of the lactic acid bacterium Lactococcus lactis ssp. lactis IL1403.</title>
        <authorList>
            <person name="Bolotin A."/>
            <person name="Wincker P."/>
            <person name="Mauger S."/>
            <person name="Jaillon O."/>
            <person name="Malarme K."/>
            <person name="Weissenbach J."/>
            <person name="Ehrlich S.D."/>
            <person name="Sorokin A."/>
        </authorList>
    </citation>
    <scope>NUCLEOTIDE SEQUENCE [LARGE SCALE GENOMIC DNA]</scope>
    <source>
        <strain>IL1403</strain>
    </source>
</reference>